<accession>A1V9B1</accession>
<reference key="1">
    <citation type="journal article" date="2009" name="Environ. Microbiol.">
        <title>Contribution of mobile genetic elements to Desulfovibrio vulgaris genome plasticity.</title>
        <authorList>
            <person name="Walker C.B."/>
            <person name="Stolyar S."/>
            <person name="Chivian D."/>
            <person name="Pinel N."/>
            <person name="Gabster J.A."/>
            <person name="Dehal P.S."/>
            <person name="He Z."/>
            <person name="Yang Z.K."/>
            <person name="Yen H.C."/>
            <person name="Zhou J."/>
            <person name="Wall J.D."/>
            <person name="Hazen T.C."/>
            <person name="Arkin A.P."/>
            <person name="Stahl D.A."/>
        </authorList>
    </citation>
    <scope>NUCLEOTIDE SEQUENCE [LARGE SCALE GENOMIC DNA]</scope>
    <source>
        <strain>DP4</strain>
    </source>
</reference>
<name>SYH_NITV4</name>
<evidence type="ECO:0000255" key="1">
    <source>
        <dbReference type="HAMAP-Rule" id="MF_00127"/>
    </source>
</evidence>
<feature type="chain" id="PRO_1000016354" description="Histidine--tRNA ligase">
    <location>
        <begin position="1"/>
        <end position="417"/>
    </location>
</feature>
<organism>
    <name type="scientific">Nitratidesulfovibrio vulgaris (strain DP4)</name>
    <name type="common">Desulfovibrio vulgaris</name>
    <dbReference type="NCBI Taxonomy" id="391774"/>
    <lineage>
        <taxon>Bacteria</taxon>
        <taxon>Pseudomonadati</taxon>
        <taxon>Thermodesulfobacteriota</taxon>
        <taxon>Desulfovibrionia</taxon>
        <taxon>Desulfovibrionales</taxon>
        <taxon>Desulfovibrionaceae</taxon>
        <taxon>Nitratidesulfovibrio</taxon>
    </lineage>
</organism>
<sequence length="417" mass="45607">MSKITKIKGFADLFPPESDVFTRMESVARQVFGRYGFVELRTPILERTDLFCRSIGTETDVVQKEMYTFPDRKDRSLTMRPEATAGVMRAYIESGRHTQEPVSKLFTSGPMFRYERPQKGRMRQFHQINCEVLGPVEPHADAELVLMLMRFLTELGLTGLSLQINSLGCKECRPLYRKALSDFLASIDNAALCEDCRRRMETNPLRVLDCKVPGCRELTANAPTILEHNCPECRTHFDAVLRILDSRNVPYVLNDRLVRGLDYYNRTTFEVVSDSIGSQGSVAGGGRYDGLISQLGGPDVPGVGFACGMERLALMMPGAEAPRPHFHVAVLDPAAQDAALLLAEDLRAQGLAGSVGFGAGSIKSRMRLAGKSGARACLILGGDELAAGTVVVKDMDSGEQETIGRDAVAARLLAAGA</sequence>
<protein>
    <recommendedName>
        <fullName evidence="1">Histidine--tRNA ligase</fullName>
        <ecNumber evidence="1">6.1.1.21</ecNumber>
    </recommendedName>
    <alternativeName>
        <fullName evidence="1">Histidyl-tRNA synthetase</fullName>
        <shortName evidence="1">HisRS</shortName>
    </alternativeName>
</protein>
<dbReference type="EC" id="6.1.1.21" evidence="1"/>
<dbReference type="EMBL" id="CP000527">
    <property type="protein sequence ID" value="ABM27051.1"/>
    <property type="molecule type" value="Genomic_DNA"/>
</dbReference>
<dbReference type="RefSeq" id="WP_011791335.1">
    <property type="nucleotide sequence ID" value="NC_008751.1"/>
</dbReference>
<dbReference type="SMR" id="A1V9B1"/>
<dbReference type="KEGG" id="dvl:Dvul_0027"/>
<dbReference type="HOGENOM" id="CLU_025113_1_1_7"/>
<dbReference type="Proteomes" id="UP000009173">
    <property type="component" value="Chromosome"/>
</dbReference>
<dbReference type="GO" id="GO:0005737">
    <property type="term" value="C:cytoplasm"/>
    <property type="evidence" value="ECO:0007669"/>
    <property type="project" value="UniProtKB-SubCell"/>
</dbReference>
<dbReference type="GO" id="GO:0005524">
    <property type="term" value="F:ATP binding"/>
    <property type="evidence" value="ECO:0007669"/>
    <property type="project" value="UniProtKB-UniRule"/>
</dbReference>
<dbReference type="GO" id="GO:0004821">
    <property type="term" value="F:histidine-tRNA ligase activity"/>
    <property type="evidence" value="ECO:0007669"/>
    <property type="project" value="UniProtKB-UniRule"/>
</dbReference>
<dbReference type="GO" id="GO:0006427">
    <property type="term" value="P:histidyl-tRNA aminoacylation"/>
    <property type="evidence" value="ECO:0007669"/>
    <property type="project" value="UniProtKB-UniRule"/>
</dbReference>
<dbReference type="CDD" id="cd00773">
    <property type="entry name" value="HisRS-like_core"/>
    <property type="match status" value="1"/>
</dbReference>
<dbReference type="CDD" id="cd00859">
    <property type="entry name" value="HisRS_anticodon"/>
    <property type="match status" value="1"/>
</dbReference>
<dbReference type="Gene3D" id="3.40.50.800">
    <property type="entry name" value="Anticodon-binding domain"/>
    <property type="match status" value="1"/>
</dbReference>
<dbReference type="Gene3D" id="3.30.930.10">
    <property type="entry name" value="Bira Bifunctional Protein, Domain 2"/>
    <property type="match status" value="1"/>
</dbReference>
<dbReference type="HAMAP" id="MF_00127">
    <property type="entry name" value="His_tRNA_synth"/>
    <property type="match status" value="1"/>
</dbReference>
<dbReference type="InterPro" id="IPR006195">
    <property type="entry name" value="aa-tRNA-synth_II"/>
</dbReference>
<dbReference type="InterPro" id="IPR045864">
    <property type="entry name" value="aa-tRNA-synth_II/BPL/LPL"/>
</dbReference>
<dbReference type="InterPro" id="IPR004154">
    <property type="entry name" value="Anticodon-bd"/>
</dbReference>
<dbReference type="InterPro" id="IPR036621">
    <property type="entry name" value="Anticodon-bd_dom_sf"/>
</dbReference>
<dbReference type="InterPro" id="IPR015807">
    <property type="entry name" value="His-tRNA-ligase"/>
</dbReference>
<dbReference type="InterPro" id="IPR041715">
    <property type="entry name" value="HisRS-like_core"/>
</dbReference>
<dbReference type="InterPro" id="IPR004516">
    <property type="entry name" value="HisRS/HisZ"/>
</dbReference>
<dbReference type="InterPro" id="IPR033656">
    <property type="entry name" value="HisRS_anticodon"/>
</dbReference>
<dbReference type="NCBIfam" id="TIGR00442">
    <property type="entry name" value="hisS"/>
    <property type="match status" value="1"/>
</dbReference>
<dbReference type="PANTHER" id="PTHR43707:SF1">
    <property type="entry name" value="HISTIDINE--TRNA LIGASE, MITOCHONDRIAL-RELATED"/>
    <property type="match status" value="1"/>
</dbReference>
<dbReference type="PANTHER" id="PTHR43707">
    <property type="entry name" value="HISTIDYL-TRNA SYNTHETASE"/>
    <property type="match status" value="1"/>
</dbReference>
<dbReference type="Pfam" id="PF03129">
    <property type="entry name" value="HGTP_anticodon"/>
    <property type="match status" value="1"/>
</dbReference>
<dbReference type="Pfam" id="PF13393">
    <property type="entry name" value="tRNA-synt_His"/>
    <property type="match status" value="1"/>
</dbReference>
<dbReference type="PIRSF" id="PIRSF001549">
    <property type="entry name" value="His-tRNA_synth"/>
    <property type="match status" value="1"/>
</dbReference>
<dbReference type="SUPFAM" id="SSF52954">
    <property type="entry name" value="Class II aaRS ABD-related"/>
    <property type="match status" value="1"/>
</dbReference>
<dbReference type="SUPFAM" id="SSF55681">
    <property type="entry name" value="Class II aaRS and biotin synthetases"/>
    <property type="match status" value="1"/>
</dbReference>
<dbReference type="PROSITE" id="PS50862">
    <property type="entry name" value="AA_TRNA_LIGASE_II"/>
    <property type="match status" value="1"/>
</dbReference>
<gene>
    <name evidence="1" type="primary">hisS</name>
    <name type="ordered locus">Dvul_0027</name>
</gene>
<keyword id="KW-0030">Aminoacyl-tRNA synthetase</keyword>
<keyword id="KW-0067">ATP-binding</keyword>
<keyword id="KW-0963">Cytoplasm</keyword>
<keyword id="KW-0436">Ligase</keyword>
<keyword id="KW-0547">Nucleotide-binding</keyword>
<keyword id="KW-0648">Protein biosynthesis</keyword>
<comment type="catalytic activity">
    <reaction evidence="1">
        <text>tRNA(His) + L-histidine + ATP = L-histidyl-tRNA(His) + AMP + diphosphate + H(+)</text>
        <dbReference type="Rhea" id="RHEA:17313"/>
        <dbReference type="Rhea" id="RHEA-COMP:9665"/>
        <dbReference type="Rhea" id="RHEA-COMP:9689"/>
        <dbReference type="ChEBI" id="CHEBI:15378"/>
        <dbReference type="ChEBI" id="CHEBI:30616"/>
        <dbReference type="ChEBI" id="CHEBI:33019"/>
        <dbReference type="ChEBI" id="CHEBI:57595"/>
        <dbReference type="ChEBI" id="CHEBI:78442"/>
        <dbReference type="ChEBI" id="CHEBI:78527"/>
        <dbReference type="ChEBI" id="CHEBI:456215"/>
        <dbReference type="EC" id="6.1.1.21"/>
    </reaction>
</comment>
<comment type="subunit">
    <text evidence="1">Homodimer.</text>
</comment>
<comment type="subcellular location">
    <subcellularLocation>
        <location evidence="1">Cytoplasm</location>
    </subcellularLocation>
</comment>
<comment type="similarity">
    <text evidence="1">Belongs to the class-II aminoacyl-tRNA synthetase family.</text>
</comment>
<proteinExistence type="inferred from homology"/>